<accession>Q9QNB2</accession>
<evidence type="ECO:0000255" key="1">
    <source>
        <dbReference type="HAMAP-Rule" id="MF_04127"/>
    </source>
</evidence>
<evidence type="ECO:0000256" key="2">
    <source>
        <dbReference type="SAM" id="MobiDB-lite"/>
    </source>
</evidence>
<protein>
    <recommendedName>
        <fullName evidence="1">Inner capsid protein VP2</fullName>
    </recommendedName>
</protein>
<feature type="chain" id="PRO_0000368057" description="Inner capsid protein VP2">
    <location>
        <begin position="1"/>
        <end position="892"/>
    </location>
</feature>
<feature type="region of interest" description="5-fold hub; involved in the encapsidation of VP1 and VP3" evidence="1">
    <location>
        <begin position="1"/>
        <end position="90"/>
    </location>
</feature>
<feature type="region of interest" description="Disordered" evidence="2">
    <location>
        <begin position="1"/>
        <end position="48"/>
    </location>
</feature>
<feature type="region of interest" description="Hydrophobic" evidence="1">
    <location>
        <begin position="406"/>
        <end position="426"/>
    </location>
</feature>
<feature type="region of interest" description="Hydrophobic" evidence="1">
    <location>
        <begin position="434"/>
        <end position="454"/>
    </location>
</feature>
<feature type="compositionally biased region" description="Basic and acidic residues" evidence="2">
    <location>
        <begin position="9"/>
        <end position="26"/>
    </location>
</feature>
<feature type="compositionally biased region" description="Low complexity" evidence="2">
    <location>
        <begin position="28"/>
        <end position="41"/>
    </location>
</feature>
<feature type="site" description="Interaction with the intermediate capsid protein VP6" evidence="1">
    <location>
        <position position="234"/>
    </location>
</feature>
<feature type="site" description="Interaction with the intermediate capsid protein VP6" evidence="1">
    <location>
        <position position="238"/>
    </location>
</feature>
<feature type="site" description="Interaction with the intermediate capsid protein VP6" evidence="1">
    <location>
        <position position="851"/>
    </location>
</feature>
<feature type="site" description="Interaction with the intermediate capsid protein VP6" evidence="1">
    <location>
        <position position="853"/>
    </location>
</feature>
<reference key="1">
    <citation type="submission" date="1999-01" db="EMBL/GenBank/DDBJ databases">
        <authorList>
            <person name="Taniguchi K."/>
        </authorList>
    </citation>
    <scope>NUCLEOTIDE SEQUENCE [MRNA]</scope>
</reference>
<dbReference type="EMBL" id="AB022766">
    <property type="protein sequence ID" value="BAA84963.1"/>
    <property type="molecule type" value="mRNA"/>
</dbReference>
<dbReference type="SMR" id="Q9QNB2"/>
<dbReference type="Proteomes" id="UP000001458">
    <property type="component" value="Genome"/>
</dbReference>
<dbReference type="GO" id="GO:0039616">
    <property type="term" value="C:T=2 icosahedral viral capsid"/>
    <property type="evidence" value="ECO:0007669"/>
    <property type="project" value="UniProtKB-UniRule"/>
</dbReference>
<dbReference type="GO" id="GO:0039625">
    <property type="term" value="C:viral inner capsid"/>
    <property type="evidence" value="ECO:0007669"/>
    <property type="project" value="UniProtKB-UniRule"/>
</dbReference>
<dbReference type="GO" id="GO:0019013">
    <property type="term" value="C:viral nucleocapsid"/>
    <property type="evidence" value="ECO:0007669"/>
    <property type="project" value="UniProtKB-UniRule"/>
</dbReference>
<dbReference type="GO" id="GO:0003723">
    <property type="term" value="F:RNA binding"/>
    <property type="evidence" value="ECO:0007669"/>
    <property type="project" value="UniProtKB-UniRule"/>
</dbReference>
<dbReference type="HAMAP" id="MF_04123">
    <property type="entry name" value="Rota_VP2"/>
    <property type="match status" value="1"/>
</dbReference>
<dbReference type="HAMAP" id="MF_04127">
    <property type="entry name" value="Rota_VP2_A"/>
    <property type="match status" value="1"/>
</dbReference>
<dbReference type="InterPro" id="IPR007779">
    <property type="entry name" value="Rotavirus_VP2"/>
</dbReference>
<dbReference type="Pfam" id="PF05087">
    <property type="entry name" value="Rota_VP2"/>
    <property type="match status" value="1"/>
</dbReference>
<keyword id="KW-0167">Capsid protein</keyword>
<keyword id="KW-1153">Inner capsid protein</keyword>
<keyword id="KW-0677">Repeat</keyword>
<keyword id="KW-0694">RNA-binding</keyword>
<keyword id="KW-1141">T=2 icosahedral capsid protein</keyword>
<keyword id="KW-0832">Ubl conjugation</keyword>
<keyword id="KW-0946">Virion</keyword>
<organism>
    <name type="scientific">Rotavirus A (strain RVA/Human/Japan/KU/1995/G1P1A[8])</name>
    <name type="common">RV-A</name>
    <dbReference type="NCBI Taxonomy" id="10952"/>
    <lineage>
        <taxon>Viruses</taxon>
        <taxon>Riboviria</taxon>
        <taxon>Orthornavirae</taxon>
        <taxon>Duplornaviricota</taxon>
        <taxon>Resentoviricetes</taxon>
        <taxon>Reovirales</taxon>
        <taxon>Sedoreoviridae</taxon>
        <taxon>Rotavirus</taxon>
        <taxon>Rotavirus A</taxon>
    </lineage>
</organism>
<organismHost>
    <name type="scientific">Homo sapiens</name>
    <name type="common">Human</name>
    <dbReference type="NCBI Taxonomy" id="9606"/>
</organismHost>
<proteinExistence type="evidence at transcript level"/>
<name>VP2_ROTHK</name>
<comment type="function">
    <text evidence="1">Inner capsid protein that self-assembles to form an icosahedral capsid with a T=2 symmetry, which consists of 120 copies of VP2, with channels at each of its five-fold vertices. This capsid constitutes the innermost concentric layer of the viral mature particle. It encapsidates the polymerase VP1, the capping enzyme VP3 and the genomic dsRNA, thereby defining the core. The innermost VP2 capsid and the intermediate VP6 capsid remain intact following cell entry to protect the dsRNA from degradation and to prevent unfavorable antiviral responses in the host cell during all the replication cycle of the virus. Nascent transcripts are transcribed within the structural confines of this double-layered particle (DLP) and are extruded through the channels formed by VP2 N-termini. VP2 is required for the replicase activity of VP1 polymerase. Probably recruits a copy of a VP1-VP3 complex, potentially along with a segment of plus-strand RNA, as a decamer of VP2 assembles. May activate the autoinhibited VP1/RNA complex to coordinate packaging and genome replication.</text>
</comment>
<comment type="subunit">
    <text evidence="1">Homodecamer; each decamer is made up of two conformers of VP2, called VP2A and VP2B. Interacts with a VP1-VP3 complex. Interacts with the intermediate capsid protein VP6. Interacts with NSP5. Interacts (via N-terminus) with NSP2.</text>
</comment>
<comment type="subcellular location">
    <subcellularLocation>
        <location evidence="1">Virion</location>
    </subcellularLocation>
    <text evidence="1">Inner capsid protein. Also found in spherical cytoplasmic structures, called virus factories, that appear early after infection and are the site of viral replication and packaging.</text>
</comment>
<comment type="domain">
    <text evidence="1">The N-terminus binds RNA. It is necessary for encapsidation of VP1 and VP3. The N-termini of 10 VP2 molecules form a cylindrical hub underneath each 5-fold axis of the inner capsid.</text>
</comment>
<comment type="PTM">
    <text evidence="1">Sumoylated with SUMO1 and SUMO2. Sumoylation of viral proteins seems to have a positive role on viral replication.</text>
</comment>
<comment type="similarity">
    <text evidence="1">Belongs to the rotavirus VP2 family.</text>
</comment>
<sequence>MAYRKRGAKREDLSQQHERLQEKEIENNTDVTMENKNNNNNRKQRLSDKVLSQKEEIITDVQDDIKIADEVKKSSKEESKQLLEILKTKEEHQKEVQYEILQKTIPTFEPKESILKKLEDIRPEQAKKQMKLFRIFEPRQLPIYRTNGEKELRNRWYWKLKKDTLPDGDYDVREYFLNLYDQILIEMPDYLLLKDMAVENKNSRDAGKVVDSETANICDAIFQDEETEGVIRRFIADMRQQVQSDRNIVNYPSILHPIDHAFNEYFLNHQLVEPLNNEIIFNYIPERIRNDVNYILNMDMNLPSTARYIRPNLLQDRLNLHDNFESLWDTITTSNYVLARSVVPDLKEKELVSTEAQIQKMSQDLQLEALTIQSETQFLAGINSQAANDCFKTLIAAMLSQRTMSLDFVTTNYMSLISGMWLLTVIPNDMFLRESLVACELAIINTIVYPAFGMQRMHYRNGDPQTPFQIAEQQIQNFQVANWLHFINNNRFRQVVIDGVLNQTLNDNIRNGQVINQLMEALMQLSRQQFPTMPVDYKRSIQRGILLLSNRLGQLVDLTRLVSYNYETLMACITMNMQHVQTLTTEKLQLTSVTSLCMLIGNTTVIPSPQTLFHYYNVSVNFHSNYNERINDAVAIITAANRLNLYQKKMKSIVEDFLKRLQIFDVPRVPDDQMYRLRDRLRLLPVERRRLDIFNLILMNMEQIERASDKIAQGVLIAYRDMQLERDEMYGFVNIARNLDGYQQINLEELMRTGDYGQITNMLLNNQPVALVGALPFVTDSSVISLIAKLDATVFAQIVKLRKVDTLKPILYKINSDSNDFYLVANYDWIPTSTTKVYKQVPQPFDFRASMHMLTSNLTFTVYSDLLSFVSADTVEPINAIAFDNMRIMNEL</sequence>